<reference key="1">
    <citation type="journal article" date="1999" name="Nature">
        <title>Sequence and analysis of chromosome 2 of the plant Arabidopsis thaliana.</title>
        <authorList>
            <person name="Lin X."/>
            <person name="Kaul S."/>
            <person name="Rounsley S.D."/>
            <person name="Shea T.P."/>
            <person name="Benito M.-I."/>
            <person name="Town C.D."/>
            <person name="Fujii C.Y."/>
            <person name="Mason T.M."/>
            <person name="Bowman C.L."/>
            <person name="Barnstead M.E."/>
            <person name="Feldblyum T.V."/>
            <person name="Buell C.R."/>
            <person name="Ketchum K.A."/>
            <person name="Lee J.J."/>
            <person name="Ronning C.M."/>
            <person name="Koo H.L."/>
            <person name="Moffat K.S."/>
            <person name="Cronin L.A."/>
            <person name="Shen M."/>
            <person name="Pai G."/>
            <person name="Van Aken S."/>
            <person name="Umayam L."/>
            <person name="Tallon L.J."/>
            <person name="Gill J.E."/>
            <person name="Adams M.D."/>
            <person name="Carrera A.J."/>
            <person name="Creasy T.H."/>
            <person name="Goodman H.M."/>
            <person name="Somerville C.R."/>
            <person name="Copenhaver G.P."/>
            <person name="Preuss D."/>
            <person name="Nierman W.C."/>
            <person name="White O."/>
            <person name="Eisen J.A."/>
            <person name="Salzberg S.L."/>
            <person name="Fraser C.M."/>
            <person name="Venter J.C."/>
        </authorList>
    </citation>
    <scope>NUCLEOTIDE SEQUENCE [LARGE SCALE GENOMIC DNA]</scope>
    <source>
        <strain>cv. Columbia</strain>
    </source>
</reference>
<reference key="2">
    <citation type="journal article" date="2017" name="Plant J.">
        <title>Araport11: a complete reannotation of the Arabidopsis thaliana reference genome.</title>
        <authorList>
            <person name="Cheng C.Y."/>
            <person name="Krishnakumar V."/>
            <person name="Chan A.P."/>
            <person name="Thibaud-Nissen F."/>
            <person name="Schobel S."/>
            <person name="Town C.D."/>
        </authorList>
    </citation>
    <scope>GENOME REANNOTATION</scope>
    <source>
        <strain>cv. Columbia</strain>
    </source>
</reference>
<reference key="3">
    <citation type="journal article" date="2005" name="Plant Physiol.">
        <title>Genome organization of more than 300 defensin-like genes in Arabidopsis.</title>
        <authorList>
            <person name="Silverstein K.A.T."/>
            <person name="Graham M.A."/>
            <person name="Paape T.D."/>
            <person name="VandenBosch K.A."/>
        </authorList>
    </citation>
    <scope>GENE FAMILY</scope>
</reference>
<organism>
    <name type="scientific">Arabidopsis thaliana</name>
    <name type="common">Mouse-ear cress</name>
    <dbReference type="NCBI Taxonomy" id="3702"/>
    <lineage>
        <taxon>Eukaryota</taxon>
        <taxon>Viridiplantae</taxon>
        <taxon>Streptophyta</taxon>
        <taxon>Embryophyta</taxon>
        <taxon>Tracheophyta</taxon>
        <taxon>Spermatophyta</taxon>
        <taxon>Magnoliopsida</taxon>
        <taxon>eudicotyledons</taxon>
        <taxon>Gunneridae</taxon>
        <taxon>Pentapetalae</taxon>
        <taxon>rosids</taxon>
        <taxon>malvids</taxon>
        <taxon>Brassicales</taxon>
        <taxon>Brassicaceae</taxon>
        <taxon>Camelineae</taxon>
        <taxon>Arabidopsis</taxon>
    </lineage>
</organism>
<feature type="signal peptide" evidence="2">
    <location>
        <begin position="1"/>
        <end position="27"/>
    </location>
</feature>
<feature type="chain" id="PRO_0000379695" description="Putative defensin-like protein 203">
    <location>
        <begin position="28"/>
        <end position="79"/>
    </location>
</feature>
<feature type="disulfide bond" evidence="1">
    <location>
        <begin position="30"/>
        <end position="79"/>
    </location>
</feature>
<feature type="disulfide bond" evidence="1">
    <location>
        <begin position="40"/>
        <end position="64"/>
    </location>
</feature>
<feature type="disulfide bond" evidence="1">
    <location>
        <begin position="49"/>
        <end position="73"/>
    </location>
</feature>
<feature type="disulfide bond" evidence="1">
    <location>
        <begin position="53"/>
        <end position="75"/>
    </location>
</feature>
<dbReference type="EMBL" id="AC006921">
    <property type="status" value="NOT_ANNOTATED_CDS"/>
    <property type="molecule type" value="Genomic_DNA"/>
</dbReference>
<dbReference type="EMBL" id="CP002685">
    <property type="protein sequence ID" value="AEC09223.1"/>
    <property type="molecule type" value="Genomic_DNA"/>
</dbReference>
<dbReference type="RefSeq" id="NP_001031491.1">
    <property type="nucleotide sequence ID" value="NM_001036414.2"/>
</dbReference>
<dbReference type="SMR" id="Q2V424"/>
<dbReference type="STRING" id="3702.Q2V424"/>
<dbReference type="PaxDb" id="3702-AT2G36255.1"/>
<dbReference type="EnsemblPlants" id="AT2G36255.1">
    <property type="protein sequence ID" value="AT2G36255.1"/>
    <property type="gene ID" value="AT2G36255"/>
</dbReference>
<dbReference type="GeneID" id="3768718"/>
<dbReference type="Gramene" id="AT2G36255.1">
    <property type="protein sequence ID" value="AT2G36255.1"/>
    <property type="gene ID" value="AT2G36255"/>
</dbReference>
<dbReference type="KEGG" id="ath:AT2G36255"/>
<dbReference type="Araport" id="AT2G36255"/>
<dbReference type="TAIR" id="AT2G36255"/>
<dbReference type="HOGENOM" id="CLU_152804_1_0_1"/>
<dbReference type="InParanoid" id="Q2V424"/>
<dbReference type="OMA" id="CHCYGPC"/>
<dbReference type="PhylomeDB" id="Q2V424"/>
<dbReference type="PRO" id="PR:Q2V424"/>
<dbReference type="Proteomes" id="UP000006548">
    <property type="component" value="Chromosome 2"/>
</dbReference>
<dbReference type="ExpressionAtlas" id="Q2V424">
    <property type="expression patterns" value="baseline"/>
</dbReference>
<dbReference type="GO" id="GO:0005576">
    <property type="term" value="C:extracellular region"/>
    <property type="evidence" value="ECO:0007669"/>
    <property type="project" value="UniProtKB-SubCell"/>
</dbReference>
<dbReference type="GO" id="GO:0050832">
    <property type="term" value="P:defense response to fungus"/>
    <property type="evidence" value="ECO:0007669"/>
    <property type="project" value="UniProtKB-KW"/>
</dbReference>
<dbReference type="GO" id="GO:0031640">
    <property type="term" value="P:killing of cells of another organism"/>
    <property type="evidence" value="ECO:0007669"/>
    <property type="project" value="UniProtKB-KW"/>
</dbReference>
<sequence>MAKLIVNFSALLMIILLVSNGLPKAVAQTCFKGEAQEGVCVKVDGSKLCDLLCRATNTTWFGACEVEDNETHCHCYGPC</sequence>
<evidence type="ECO:0000250" key="1"/>
<evidence type="ECO:0000255" key="2"/>
<evidence type="ECO:0000305" key="3"/>
<gene>
    <name type="ordered locus">At2g36255</name>
    <name type="ORF">F2H17</name>
</gene>
<accession>Q2V424</accession>
<protein>
    <recommendedName>
        <fullName>Putative defensin-like protein 203</fullName>
    </recommendedName>
</protein>
<proteinExistence type="inferred from homology"/>
<keyword id="KW-0929">Antimicrobial</keyword>
<keyword id="KW-1015">Disulfide bond</keyword>
<keyword id="KW-0295">Fungicide</keyword>
<keyword id="KW-0611">Plant defense</keyword>
<keyword id="KW-1185">Reference proteome</keyword>
<keyword id="KW-0964">Secreted</keyword>
<keyword id="KW-0732">Signal</keyword>
<comment type="subcellular location">
    <subcellularLocation>
        <location evidence="1">Secreted</location>
    </subcellularLocation>
</comment>
<comment type="similarity">
    <text evidence="3">Belongs to the DEFL family.</text>
</comment>
<name>DF203_ARATH</name>